<protein>
    <recommendedName>
        <fullName evidence="3">RNA-splicing ligase RtcB homolog</fullName>
        <ecNumber evidence="3">6.5.1.8</ecNumber>
    </recommendedName>
    <alternativeName>
        <fullName evidence="3">3'-phosphate/5'-hydroxy nucleic acid ligase</fullName>
    </alternativeName>
    <alternativeName>
        <fullName>p55</fullName>
    </alternativeName>
</protein>
<feature type="chain" id="PRO_0000255245" description="RNA-splicing ligase RtcB homolog">
    <location>
        <begin position="1"/>
        <end position="505"/>
    </location>
</feature>
<feature type="active site" description="GMP-histidine intermediate" evidence="3">
    <location>
        <position position="428"/>
    </location>
</feature>
<feature type="binding site" evidence="3">
    <location>
        <position position="119"/>
    </location>
    <ligand>
        <name>Mn(2+)</name>
        <dbReference type="ChEBI" id="CHEBI:29035"/>
        <label>1</label>
    </ligand>
</feature>
<feature type="binding site" evidence="3">
    <location>
        <position position="122"/>
    </location>
    <ligand>
        <name>Mn(2+)</name>
        <dbReference type="ChEBI" id="CHEBI:29035"/>
        <label>1</label>
    </ligand>
</feature>
<feature type="binding site" evidence="3">
    <location>
        <position position="122"/>
    </location>
    <ligand>
        <name>Mn(2+)</name>
        <dbReference type="ChEBI" id="CHEBI:29035"/>
        <label>2</label>
    </ligand>
</feature>
<feature type="binding site" evidence="3">
    <location>
        <begin position="226"/>
        <end position="230"/>
    </location>
    <ligand>
        <name>GMP</name>
        <dbReference type="ChEBI" id="CHEBI:58115"/>
    </ligand>
</feature>
<feature type="binding site" evidence="3">
    <location>
        <position position="227"/>
    </location>
    <ligand>
        <name>Mn(2+)</name>
        <dbReference type="ChEBI" id="CHEBI:29035"/>
        <label>1</label>
    </ligand>
</feature>
<feature type="binding site" evidence="3">
    <location>
        <position position="259"/>
    </location>
    <ligand>
        <name>Mn(2+)</name>
        <dbReference type="ChEBI" id="CHEBI:29035"/>
        <label>2</label>
    </ligand>
</feature>
<feature type="binding site" evidence="3">
    <location>
        <begin position="353"/>
        <end position="354"/>
    </location>
    <ligand>
        <name>GMP</name>
        <dbReference type="ChEBI" id="CHEBI:58115"/>
    </ligand>
</feature>
<feature type="binding site" evidence="3">
    <location>
        <position position="353"/>
    </location>
    <ligand>
        <name>Mn(2+)</name>
        <dbReference type="ChEBI" id="CHEBI:29035"/>
        <label>2</label>
    </ligand>
</feature>
<feature type="binding site" evidence="3">
    <location>
        <begin position="402"/>
        <end position="405"/>
    </location>
    <ligand>
        <name>GMP</name>
        <dbReference type="ChEBI" id="CHEBI:58115"/>
    </ligand>
</feature>
<feature type="binding site" evidence="3">
    <location>
        <position position="409"/>
    </location>
    <ligand>
        <name>GMP</name>
        <dbReference type="ChEBI" id="CHEBI:58115"/>
    </ligand>
</feature>
<feature type="binding site" evidence="3">
    <location>
        <begin position="428"/>
        <end position="431"/>
    </location>
    <ligand>
        <name>GMP</name>
        <dbReference type="ChEBI" id="CHEBI:58115"/>
    </ligand>
</feature>
<feature type="binding site" evidence="3">
    <location>
        <position position="504"/>
    </location>
    <ligand>
        <name>GMP</name>
        <dbReference type="ChEBI" id="CHEBI:58115"/>
    </ligand>
</feature>
<feature type="modified residue" description="Phosphoserine" evidence="2">
    <location>
        <position position="300"/>
    </location>
</feature>
<feature type="cross-link" description="Glycyl lysine isopeptide (Lys-Gly) (interchain with G-Cter in SUMO2)" evidence="2">
    <location>
        <position position="496"/>
    </location>
</feature>
<feature type="sequence conflict" description="In Ref. 1; AAS78621." evidence="4" ref="1">
    <original>Y</original>
    <variation>C</variation>
    <location>
        <position position="316"/>
    </location>
</feature>
<dbReference type="EC" id="6.5.1.8" evidence="3"/>
<dbReference type="EMBL" id="AY572415">
    <property type="protein sequence ID" value="AAS78621.1"/>
    <property type="molecule type" value="mRNA"/>
</dbReference>
<dbReference type="EMBL" id="BC078924">
    <property type="protein sequence ID" value="AAH78924.1"/>
    <property type="molecule type" value="mRNA"/>
</dbReference>
<dbReference type="RefSeq" id="NP_997497.2">
    <property type="nucleotide sequence ID" value="NM_207614.2"/>
</dbReference>
<dbReference type="SMR" id="Q6AYT3"/>
<dbReference type="BioGRID" id="263779">
    <property type="interactions" value="8"/>
</dbReference>
<dbReference type="FunCoup" id="Q6AYT3">
    <property type="interactions" value="2463"/>
</dbReference>
<dbReference type="IntAct" id="Q6AYT3">
    <property type="interactions" value="5"/>
</dbReference>
<dbReference type="MINT" id="Q6AYT3"/>
<dbReference type="STRING" id="10116.ENSRNOP00000006570"/>
<dbReference type="iPTMnet" id="Q6AYT3"/>
<dbReference type="PhosphoSitePlus" id="Q6AYT3"/>
<dbReference type="jPOST" id="Q6AYT3"/>
<dbReference type="PaxDb" id="10116-ENSRNOP00000006570"/>
<dbReference type="GeneID" id="362855"/>
<dbReference type="KEGG" id="rno:362855"/>
<dbReference type="UCSC" id="RGD:1303261">
    <property type="organism name" value="rat"/>
</dbReference>
<dbReference type="AGR" id="RGD:1303261"/>
<dbReference type="CTD" id="51493"/>
<dbReference type="RGD" id="1303261">
    <property type="gene designation" value="Rtcb"/>
</dbReference>
<dbReference type="VEuPathDB" id="HostDB:ENSRNOG00000004813"/>
<dbReference type="eggNOG" id="KOG3833">
    <property type="taxonomic scope" value="Eukaryota"/>
</dbReference>
<dbReference type="HOGENOM" id="CLU_022279_0_0_1"/>
<dbReference type="InParanoid" id="Q6AYT3"/>
<dbReference type="PhylomeDB" id="Q6AYT3"/>
<dbReference type="TreeFam" id="TF314404"/>
<dbReference type="PRO" id="PR:Q6AYT3"/>
<dbReference type="Proteomes" id="UP000002494">
    <property type="component" value="Chromosome 7"/>
</dbReference>
<dbReference type="Bgee" id="ENSRNOG00000004813">
    <property type="expression patterns" value="Expressed in jejunum and 19 other cell types or tissues"/>
</dbReference>
<dbReference type="GO" id="GO:0005737">
    <property type="term" value="C:cytoplasm"/>
    <property type="evidence" value="ECO:0000250"/>
    <property type="project" value="UniProtKB"/>
</dbReference>
<dbReference type="GO" id="GO:0005789">
    <property type="term" value="C:endoplasmic reticulum membrane"/>
    <property type="evidence" value="ECO:0000266"/>
    <property type="project" value="RGD"/>
</dbReference>
<dbReference type="GO" id="GO:0005635">
    <property type="term" value="C:nuclear envelope"/>
    <property type="evidence" value="ECO:0000266"/>
    <property type="project" value="RGD"/>
</dbReference>
<dbReference type="GO" id="GO:0005634">
    <property type="term" value="C:nucleus"/>
    <property type="evidence" value="ECO:0000250"/>
    <property type="project" value="UniProtKB"/>
</dbReference>
<dbReference type="GO" id="GO:0072669">
    <property type="term" value="C:tRNA-splicing ligase complex"/>
    <property type="evidence" value="ECO:0000250"/>
    <property type="project" value="UniProtKB"/>
</dbReference>
<dbReference type="GO" id="GO:0005525">
    <property type="term" value="F:GTP binding"/>
    <property type="evidence" value="ECO:0007669"/>
    <property type="project" value="UniProtKB-KW"/>
</dbReference>
<dbReference type="GO" id="GO:0046872">
    <property type="term" value="F:metal ion binding"/>
    <property type="evidence" value="ECO:0007669"/>
    <property type="project" value="UniProtKB-KW"/>
</dbReference>
<dbReference type="GO" id="GO:0170057">
    <property type="term" value="F:RNA ligase (GTP) activity"/>
    <property type="evidence" value="ECO:0000250"/>
    <property type="project" value="UniProtKB"/>
</dbReference>
<dbReference type="GO" id="GO:0017166">
    <property type="term" value="F:vinculin binding"/>
    <property type="evidence" value="ECO:0000266"/>
    <property type="project" value="RGD"/>
</dbReference>
<dbReference type="GO" id="GO:0001701">
    <property type="term" value="P:in utero embryonic development"/>
    <property type="evidence" value="ECO:0000266"/>
    <property type="project" value="RGD"/>
</dbReference>
<dbReference type="GO" id="GO:0001890">
    <property type="term" value="P:placenta development"/>
    <property type="evidence" value="ECO:0000266"/>
    <property type="project" value="RGD"/>
</dbReference>
<dbReference type="GO" id="GO:0006388">
    <property type="term" value="P:tRNA splicing, via endonucleolytic cleavage and ligation"/>
    <property type="evidence" value="ECO:0000250"/>
    <property type="project" value="UniProtKB"/>
</dbReference>
<dbReference type="FunFam" id="3.90.1860.10:FF:000001">
    <property type="entry name" value="tRNA-splicing ligase RtcB homolog"/>
    <property type="match status" value="1"/>
</dbReference>
<dbReference type="Gene3D" id="3.90.1860.10">
    <property type="entry name" value="tRNA-splicing ligase RtcB"/>
    <property type="match status" value="1"/>
</dbReference>
<dbReference type="HAMAP" id="MF_03144">
    <property type="entry name" value="RtcB_euk"/>
    <property type="match status" value="1"/>
</dbReference>
<dbReference type="InterPro" id="IPR001233">
    <property type="entry name" value="RtcB"/>
</dbReference>
<dbReference type="InterPro" id="IPR036025">
    <property type="entry name" value="RtcB-like_sf"/>
</dbReference>
<dbReference type="InterPro" id="IPR027513">
    <property type="entry name" value="RtcB_euk"/>
</dbReference>
<dbReference type="PANTHER" id="PTHR11118">
    <property type="entry name" value="RNA-SPLICING LIGASE RTCB HOMOLOG"/>
    <property type="match status" value="1"/>
</dbReference>
<dbReference type="PANTHER" id="PTHR11118:SF1">
    <property type="entry name" value="RNA-SPLICING LIGASE RTCB HOMOLOG"/>
    <property type="match status" value="1"/>
</dbReference>
<dbReference type="Pfam" id="PF01139">
    <property type="entry name" value="RtcB"/>
    <property type="match status" value="1"/>
</dbReference>
<dbReference type="SUPFAM" id="SSF103365">
    <property type="entry name" value="Hypothetical protein PH1602"/>
    <property type="match status" value="1"/>
</dbReference>
<dbReference type="PROSITE" id="PS01288">
    <property type="entry name" value="UPF0027"/>
    <property type="match status" value="1"/>
</dbReference>
<organism>
    <name type="scientific">Rattus norvegicus</name>
    <name type="common">Rat</name>
    <dbReference type="NCBI Taxonomy" id="10116"/>
    <lineage>
        <taxon>Eukaryota</taxon>
        <taxon>Metazoa</taxon>
        <taxon>Chordata</taxon>
        <taxon>Craniata</taxon>
        <taxon>Vertebrata</taxon>
        <taxon>Euteleostomi</taxon>
        <taxon>Mammalia</taxon>
        <taxon>Eutheria</taxon>
        <taxon>Euarchontoglires</taxon>
        <taxon>Glires</taxon>
        <taxon>Rodentia</taxon>
        <taxon>Myomorpha</taxon>
        <taxon>Muroidea</taxon>
        <taxon>Muridae</taxon>
        <taxon>Murinae</taxon>
        <taxon>Rattus</taxon>
    </lineage>
</organism>
<comment type="function">
    <text evidence="3">Catalytic subunit of the tRNA-splicing ligase complex that acts by directly joining spliced tRNA halves to mature-sized tRNAs by incorporating the precursor-derived splice junction phosphate into the mature tRNA as a canonical 3',5'-phosphodiester. May act as an RNA ligase with broad substrate specificity, and may function toward other RNAs.</text>
</comment>
<comment type="catalytic activity">
    <reaction evidence="3">
        <text>a 3'-end 3'-phospho-ribonucleotide-RNA + a 5'-end dephospho-ribonucleoside-RNA + GTP = a ribonucleotidyl-ribonucleotide-RNA + GMP + diphosphate</text>
        <dbReference type="Rhea" id="RHEA:68076"/>
        <dbReference type="Rhea" id="RHEA-COMP:10463"/>
        <dbReference type="Rhea" id="RHEA-COMP:13936"/>
        <dbReference type="Rhea" id="RHEA-COMP:17355"/>
        <dbReference type="ChEBI" id="CHEBI:33019"/>
        <dbReference type="ChEBI" id="CHEBI:37565"/>
        <dbReference type="ChEBI" id="CHEBI:58115"/>
        <dbReference type="ChEBI" id="CHEBI:83062"/>
        <dbReference type="ChEBI" id="CHEBI:138284"/>
        <dbReference type="ChEBI" id="CHEBI:173118"/>
        <dbReference type="EC" id="6.5.1.8"/>
    </reaction>
</comment>
<comment type="catalytic activity">
    <reaction evidence="3">
        <text>a 3'-end 2',3'-cyclophospho-ribonucleotide-RNA + a 5'-end dephospho-ribonucleoside-RNA + GTP + H2O = a ribonucleotidyl-ribonucleotide-RNA + GMP + diphosphate + H(+)</text>
        <dbReference type="Rhea" id="RHEA:68080"/>
        <dbReference type="Rhea" id="RHEA-COMP:10464"/>
        <dbReference type="Rhea" id="RHEA-COMP:13936"/>
        <dbReference type="Rhea" id="RHEA-COMP:17355"/>
        <dbReference type="ChEBI" id="CHEBI:15377"/>
        <dbReference type="ChEBI" id="CHEBI:15378"/>
        <dbReference type="ChEBI" id="CHEBI:33019"/>
        <dbReference type="ChEBI" id="CHEBI:37565"/>
        <dbReference type="ChEBI" id="CHEBI:58115"/>
        <dbReference type="ChEBI" id="CHEBI:83064"/>
        <dbReference type="ChEBI" id="CHEBI:138284"/>
        <dbReference type="ChEBI" id="CHEBI:173118"/>
        <dbReference type="EC" id="6.5.1.8"/>
    </reaction>
</comment>
<comment type="cofactor">
    <cofactor evidence="3">
        <name>Mn(2+)</name>
        <dbReference type="ChEBI" id="CHEBI:29035"/>
    </cofactor>
    <text evidence="3">Binds 2 manganese ions per subunit.</text>
</comment>
<comment type="subunit">
    <text evidence="3">Catalytic component of the tRNA-splicing ligase complex.</text>
</comment>
<comment type="subcellular location">
    <subcellularLocation>
        <location evidence="1">Nucleus</location>
    </subcellularLocation>
    <subcellularLocation>
        <location evidence="3">Cytoplasm</location>
    </subcellularLocation>
    <text evidence="1">Enters into the nucleus in case of active transcription while it accumulates in cytosol when transcription level is low.</text>
</comment>
<comment type="miscellaneous">
    <text evidence="3">Ligation probably proceeds through 3 nucleotidyl transfer steps, with 2',3'-cyclic phosphate termini being hydrolyzed to 3'-P termini in a step that precedes 3'-P activation with GMP. In the first nucleotidyl transfer step, RTCB reacts with GTP to form a covalent RTCB-histidine-GMP intermediate with release of PPi; in the second step, the GMP moiety is transferred to the RNA 3'-P; in the third step, the 5'-OH from the opposite RNA strand attacks the activated 3'-P to form a 3',5'-phosphodiester bond and release GMP.</text>
</comment>
<comment type="similarity">
    <text evidence="3">Belongs to the RtcB family.</text>
</comment>
<sequence length="505" mass="55249">MSRNYNDELQFLDKINKNCWRIKKGFVPNMQVEGVFYVNDALEKLMFEELRNACRGGGVGGFLPAMKQIGNVAALPGIVHRSIGLPDVHSGYGFAIGNMAAFDMNDPEAVVSPGGVGFDINCGVRLLRTNLDESDVQPVKEQLAQAMFDHIPVGVGSKGVIPMNAKDLEEALEMGVDWSLREGYAWAEDKEHCEEYGRMLQADPNKVSPRAKKRGLPQLGTLGAGNHYAEIQVVDEIFNEYAAKKMGIDHKGQVCVMIHSGSRGLGHQVATDALVAMEKAMKRDKIIVNDRQLACARIASPEGQDYLKGMAAAGNYAWVNRSSMTFLTRQAFAKVFNTTPDDLDLHVIYDVSHNIAKVEQHVVDGKERTLLVHRKGSTRAFPPHHPLIAVDYQLTGQPVLIGGTMGTCSYVLTGTEQGMTETFGTTCHGAGRALSRAKSRRNLDFQDVLDKLADMGIAIRVASPKLVMEEAPESYKNVTDVVNTCHDAGISKKAIKLRPIAVIKG</sequence>
<gene>
    <name evidence="3" type="primary">Rtcb</name>
</gene>
<name>RTCB_RAT</name>
<reference key="1">
    <citation type="submission" date="2004-03" db="EMBL/GenBank/DDBJ databases">
        <title>Cloning of the rat P55 gene.</title>
        <authorList>
            <person name="Ding N.-Z."/>
            <person name="He M."/>
            <person name="He C.-Q."/>
            <person name="Chen J.G."/>
        </authorList>
    </citation>
    <scope>NUCLEOTIDE SEQUENCE [MRNA]</scope>
</reference>
<reference key="2">
    <citation type="journal article" date="2004" name="Genome Res.">
        <title>The status, quality, and expansion of the NIH full-length cDNA project: the Mammalian Gene Collection (MGC).</title>
        <authorList>
            <consortium name="The MGC Project Team"/>
        </authorList>
    </citation>
    <scope>NUCLEOTIDE SEQUENCE [LARGE SCALE MRNA]</scope>
    <source>
        <strain>Brown Norway</strain>
        <tissue>Kidney</tissue>
    </source>
</reference>
<proteinExistence type="evidence at transcript level"/>
<evidence type="ECO:0000250" key="1"/>
<evidence type="ECO:0000250" key="2">
    <source>
        <dbReference type="UniProtKB" id="Q9Y3I0"/>
    </source>
</evidence>
<evidence type="ECO:0000255" key="3">
    <source>
        <dbReference type="HAMAP-Rule" id="MF_03144"/>
    </source>
</evidence>
<evidence type="ECO:0000305" key="4"/>
<keyword id="KW-0963">Cytoplasm</keyword>
<keyword id="KW-0342">GTP-binding</keyword>
<keyword id="KW-1017">Isopeptide bond</keyword>
<keyword id="KW-0436">Ligase</keyword>
<keyword id="KW-0464">Manganese</keyword>
<keyword id="KW-0479">Metal-binding</keyword>
<keyword id="KW-0547">Nucleotide-binding</keyword>
<keyword id="KW-0539">Nucleus</keyword>
<keyword id="KW-0597">Phosphoprotein</keyword>
<keyword id="KW-1185">Reference proteome</keyword>
<keyword id="KW-0819">tRNA processing</keyword>
<keyword id="KW-0832">Ubl conjugation</keyword>
<accession>Q6AYT3</accession>
<accession>Q6PX76</accession>